<keyword id="KW-0428">Leader peptide</keyword>
<keyword id="KW-0694">RNA-binding</keyword>
<keyword id="KW-0699">rRNA-binding</keyword>
<keyword id="KW-0804">Transcription</keyword>
<keyword id="KW-0805">Transcription regulation</keyword>
<keyword id="KW-0810">Translation regulation</keyword>
<proteinExistence type="evidence at protein level"/>
<protein>
    <recommendedName>
        <fullName evidence="1">Leader peptide SpeFL</fullName>
    </recommendedName>
    <alternativeName>
        <fullName evidence="1">Arrest peptide SpeFL</fullName>
    </alternativeName>
</protein>
<evidence type="ECO:0000255" key="1">
    <source>
        <dbReference type="HAMAP-Rule" id="MF_00851"/>
    </source>
</evidence>
<evidence type="ECO:0000269" key="2">
    <source>
    </source>
</evidence>
<evidence type="ECO:0000303" key="3">
    <source>
    </source>
</evidence>
<evidence type="ECO:0000305" key="4"/>
<reference key="1">
    <citation type="journal article" date="2012" name="Proc. Natl. Acad. Sci. U.S.A.">
        <title>The transcriptional landscape and small RNAs of Salmonella enterica serovar Typhimurium.</title>
        <authorList>
            <person name="Kroger C."/>
            <person name="Dillon S.C."/>
            <person name="Cameron A.D."/>
            <person name="Papenfort K."/>
            <person name="Sivasankaran S.K."/>
            <person name="Hokamp K."/>
            <person name="Chao Y."/>
            <person name="Sittka A."/>
            <person name="Hebrard M."/>
            <person name="Handler K."/>
            <person name="Colgan A."/>
            <person name="Leekitcharoenphon P."/>
            <person name="Langridge G.C."/>
            <person name="Lohan A.J."/>
            <person name="Loftus B."/>
            <person name="Lucchini S."/>
            <person name="Ussery D.W."/>
            <person name="Dorman C.J."/>
            <person name="Thomson N.R."/>
            <person name="Vogel J."/>
            <person name="Hinton J.C."/>
        </authorList>
    </citation>
    <scope>NUCLEOTIDE SEQUENCE [LARGE SCALE GENOMIC DNA]</scope>
    <source>
        <strain>SL1344</strain>
    </source>
</reference>
<reference key="2">
    <citation type="journal article" date="2019" name="PLoS Genet.">
        <title>mRNA dynamics and alternative conformations adopted under low and high arginine concentrations control polyamine biosynthesis in Salmonella.</title>
        <authorList>
            <person name="Ben-Zvi T."/>
            <person name="Pushkarev A."/>
            <person name="Seri H."/>
            <person name="Elgrably-Weiss M."/>
            <person name="Papenfort K."/>
            <person name="Altuvia S."/>
        </authorList>
    </citation>
    <scope>IDENTIFICATION</scope>
    <scope>FUNCTION</scope>
    <scope>DISRUPTION PHENOTYPE</scope>
    <scope>MUTAGENESIS OF 11-ILE--ARG-34; 12-ARG-ARG-13; 26-PHE--ARG-34 AND ARG-34</scope>
    <source>
        <strain>SL1344</strain>
    </source>
</reference>
<dbReference type="EMBL" id="FQ312003">
    <property type="status" value="NOT_ANNOTATED_CDS"/>
    <property type="molecule type" value="Genomic_DNA"/>
</dbReference>
<dbReference type="SMR" id="P0DTV8"/>
<dbReference type="Proteomes" id="UP000008962">
    <property type="component" value="Chromosome"/>
</dbReference>
<dbReference type="GO" id="GO:0019843">
    <property type="term" value="F:rRNA binding"/>
    <property type="evidence" value="ECO:0007669"/>
    <property type="project" value="UniProtKB-KW"/>
</dbReference>
<dbReference type="GO" id="GO:0006448">
    <property type="term" value="P:regulation of translational elongation"/>
    <property type="evidence" value="ECO:0007669"/>
    <property type="project" value="UniProtKB-UniRule"/>
</dbReference>
<dbReference type="GO" id="GO:0031556">
    <property type="term" value="P:transcriptional attenuation by ribosome"/>
    <property type="evidence" value="ECO:0007669"/>
    <property type="project" value="UniProtKB-UniRule"/>
</dbReference>
<dbReference type="HAMAP" id="MF_00851">
    <property type="entry name" value="Leader_SpeFL"/>
    <property type="match status" value="1"/>
</dbReference>
<dbReference type="InterPro" id="IPR021237">
    <property type="entry name" value="SpeFL"/>
</dbReference>
<dbReference type="Pfam" id="PF10940">
    <property type="entry name" value="SpeFL"/>
    <property type="match status" value="1"/>
</dbReference>
<comment type="function">
    <text evidence="1 2">A small protein (arrest peptide) encoded upstream of inducible ornithine carboxylase gene (speF) that controls expression of downstream genes (speF and potE) by transcriptional and translational attenuation. Its expression controls transcription and translation of downstream SpeF; translation pausing at low Arg levels on this mRNA prevents premature Rho-dependent transcription termination of speF and also enhances SprF translation by preventing sequestration of its ribosome-binding site. In the presence of high Arg levels translation of this protein allows the formation of an speF mRNA structure that is degraded by RNase G.</text>
</comment>
<comment type="subunit">
    <text evidence="1">Binds ornithine in stalled 70S ribosomes, blocking the upper two-thirds of the exit tunnel. Contacts 23S rRNA and ribosomal proteins L4 and L22.</text>
</comment>
<comment type="induction">
    <text evidence="1">Induced by ornithine, repressed by putrescine. Part of the speFL-speF-potE operon.</text>
</comment>
<comment type="disruption phenotype">
    <text evidence="2">Replacing its start codon by AAA (Lys) prevents expression of SpeFL and leads to generation of a prematurely truncated speF transcript, and thus prevents expression of downstream SpeF.</text>
</comment>
<comment type="similarity">
    <text evidence="1 4">Belongs to the speF operon leader peptide family.</text>
</comment>
<feature type="chain" id="PRO_0000450347" description="Leader peptide SpeFL">
    <location>
        <begin position="1"/>
        <end position="34"/>
    </location>
</feature>
<feature type="short sequence motif" description="Ornithine recognition loop" evidence="1">
    <location>
        <begin position="10"/>
        <end position="16"/>
    </location>
</feature>
<feature type="binding site" evidence="1">
    <location>
        <position position="13"/>
    </location>
    <ligand>
        <name>L-ornithine</name>
        <dbReference type="ChEBI" id="CHEBI:46911"/>
    </ligand>
</feature>
<feature type="mutagenesis site" description="Prevents expression of full-length speF transcript." evidence="2">
    <location>
        <begin position="11"/>
        <end position="34"/>
    </location>
</feature>
<feature type="mutagenesis site" description="SpeF expression is no longer decreased in response to Arg. Altering these codons to frequent Arg codons does not alter SpeF expression." evidence="2">
    <original>RR</original>
    <variation>KK</variation>
    <location>
        <begin position="12"/>
        <end position="13"/>
    </location>
</feature>
<feature type="mutagenesis site" description="Prevents expression of full-length speF transcript." evidence="2">
    <location>
        <begin position="26"/>
        <end position="34"/>
    </location>
</feature>
<feature type="mutagenesis site" description="No change in regulation of SpeF." evidence="2">
    <original>R</original>
    <variation>Q</variation>
    <location>
        <position position="34"/>
    </location>
</feature>
<feature type="mutagenesis site" description="Removes Arg regulation of downstream speF transcript which is now stable in the presence of Arg." evidence="2">
    <original>R</original>
    <variation>RWFFCYGYFSIQVFPTLMSFRSIA</variation>
    <location>
        <position position="34"/>
    </location>
</feature>
<name>SPEFL_SALTS</name>
<accession>P0DTV8</accession>
<sequence length="34" mass="4325">MENNNRFMPHIRRTTHIMMFAHRNSFDFHFFNAR</sequence>
<gene>
    <name evidence="1" type="primary">speFL</name>
    <name evidence="3" type="synonym">orf34</name>
    <name type="ordered locus">SL1344_0683.1</name>
</gene>
<organism>
    <name type="scientific">Salmonella typhimurium (strain SL1344)</name>
    <dbReference type="NCBI Taxonomy" id="216597"/>
    <lineage>
        <taxon>Bacteria</taxon>
        <taxon>Pseudomonadati</taxon>
        <taxon>Pseudomonadota</taxon>
        <taxon>Gammaproteobacteria</taxon>
        <taxon>Enterobacterales</taxon>
        <taxon>Enterobacteriaceae</taxon>
        <taxon>Salmonella</taxon>
    </lineage>
</organism>